<name>Y2061_LACPL</name>
<accession>Q88VI8</accession>
<accession>F9UQ16</accession>
<reference key="1">
    <citation type="journal article" date="2003" name="Proc. Natl. Acad. Sci. U.S.A.">
        <title>Complete genome sequence of Lactobacillus plantarum WCFS1.</title>
        <authorList>
            <person name="Kleerebezem M."/>
            <person name="Boekhorst J."/>
            <person name="van Kranenburg R."/>
            <person name="Molenaar D."/>
            <person name="Kuipers O.P."/>
            <person name="Leer R."/>
            <person name="Tarchini R."/>
            <person name="Peters S.A."/>
            <person name="Sandbrink H.M."/>
            <person name="Fiers M.W.E.J."/>
            <person name="Stiekema W."/>
            <person name="Klein Lankhorst R.M."/>
            <person name="Bron P.A."/>
            <person name="Hoffer S.M."/>
            <person name="Nierop Groot M.N."/>
            <person name="Kerkhoven R."/>
            <person name="De Vries M."/>
            <person name="Ursing B."/>
            <person name="De Vos W.M."/>
            <person name="Siezen R.J."/>
        </authorList>
    </citation>
    <scope>NUCLEOTIDE SEQUENCE [LARGE SCALE GENOMIC DNA]</scope>
    <source>
        <strain>ATCC BAA-793 / NCIMB 8826 / WCFS1</strain>
    </source>
</reference>
<reference key="2">
    <citation type="journal article" date="2012" name="J. Bacteriol.">
        <title>Complete resequencing and reannotation of the Lactobacillus plantarum WCFS1 genome.</title>
        <authorList>
            <person name="Siezen R.J."/>
            <person name="Francke C."/>
            <person name="Renckens B."/>
            <person name="Boekhorst J."/>
            <person name="Wels M."/>
            <person name="Kleerebezem M."/>
            <person name="van Hijum S.A."/>
        </authorList>
    </citation>
    <scope>NUCLEOTIDE SEQUENCE [LARGE SCALE GENOMIC DNA]</scope>
    <scope>GENOME REANNOTATION</scope>
    <source>
        <strain>ATCC BAA-793 / NCIMB 8826 / WCFS1</strain>
    </source>
</reference>
<comment type="subcellular location">
    <subcellularLocation>
        <location evidence="1">Membrane</location>
        <topology evidence="1">Single-pass membrane protein</topology>
    </subcellularLocation>
</comment>
<comment type="similarity">
    <text evidence="1">Belongs to the UPF0154 family.</text>
</comment>
<organism>
    <name type="scientific">Lactiplantibacillus plantarum (strain ATCC BAA-793 / NCIMB 8826 / WCFS1)</name>
    <name type="common">Lactobacillus plantarum</name>
    <dbReference type="NCBI Taxonomy" id="220668"/>
    <lineage>
        <taxon>Bacteria</taxon>
        <taxon>Bacillati</taxon>
        <taxon>Bacillota</taxon>
        <taxon>Bacilli</taxon>
        <taxon>Lactobacillales</taxon>
        <taxon>Lactobacillaceae</taxon>
        <taxon>Lactiplantibacillus</taxon>
    </lineage>
</organism>
<gene>
    <name type="ordered locus">lp_2061</name>
</gene>
<feature type="chain" id="PRO_0000214963" description="UPF0154 protein lp_2061">
    <location>
        <begin position="1"/>
        <end position="78"/>
    </location>
</feature>
<feature type="transmembrane region" description="Helical" evidence="1">
    <location>
        <begin position="5"/>
        <end position="27"/>
    </location>
</feature>
<evidence type="ECO:0000255" key="1">
    <source>
        <dbReference type="HAMAP-Rule" id="MF_00363"/>
    </source>
</evidence>
<sequence>MTVSTGIWILIVVIGVLVGLTGGFFGARHYMQNYLKQNPPISEEMLRSMMMQMGQRPSEKKLHQMLNSMKAASKNDNK</sequence>
<proteinExistence type="inferred from homology"/>
<dbReference type="EMBL" id="AL935263">
    <property type="protein sequence ID" value="CCC79305.1"/>
    <property type="molecule type" value="Genomic_DNA"/>
</dbReference>
<dbReference type="RefSeq" id="WP_003640745.1">
    <property type="nucleotide sequence ID" value="NC_004567.2"/>
</dbReference>
<dbReference type="RefSeq" id="YP_004889819.1">
    <property type="nucleotide sequence ID" value="NC_004567.2"/>
</dbReference>
<dbReference type="SMR" id="Q88VI8"/>
<dbReference type="STRING" id="220668.lp_2061"/>
<dbReference type="EnsemblBacteria" id="CCC79305">
    <property type="protein sequence ID" value="CCC79305"/>
    <property type="gene ID" value="lp_2061"/>
</dbReference>
<dbReference type="KEGG" id="lpl:lp_2061"/>
<dbReference type="PATRIC" id="fig|220668.9.peg.1746"/>
<dbReference type="eggNOG" id="COG3763">
    <property type="taxonomic scope" value="Bacteria"/>
</dbReference>
<dbReference type="HOGENOM" id="CLU_180108_0_1_9"/>
<dbReference type="OrthoDB" id="1769076at2"/>
<dbReference type="PhylomeDB" id="Q88VI8"/>
<dbReference type="Proteomes" id="UP000000432">
    <property type="component" value="Chromosome"/>
</dbReference>
<dbReference type="GO" id="GO:0005886">
    <property type="term" value="C:plasma membrane"/>
    <property type="evidence" value="ECO:0007669"/>
    <property type="project" value="UniProtKB-UniRule"/>
</dbReference>
<dbReference type="HAMAP" id="MF_00363">
    <property type="entry name" value="UPF0154"/>
    <property type="match status" value="1"/>
</dbReference>
<dbReference type="InterPro" id="IPR005359">
    <property type="entry name" value="UPF0154"/>
</dbReference>
<dbReference type="Pfam" id="PF03672">
    <property type="entry name" value="UPF0154"/>
    <property type="match status" value="1"/>
</dbReference>
<protein>
    <recommendedName>
        <fullName evidence="1">UPF0154 protein lp_2061</fullName>
    </recommendedName>
</protein>
<keyword id="KW-0472">Membrane</keyword>
<keyword id="KW-1185">Reference proteome</keyword>
<keyword id="KW-0812">Transmembrane</keyword>
<keyword id="KW-1133">Transmembrane helix</keyword>